<reference key="1">
    <citation type="journal article" date="2009" name="J. Bacteriol.">
        <title>Genomic sequencing reveals regulatory mutations and recombinational events in the widely used MC4100 lineage of Escherichia coli K-12.</title>
        <authorList>
            <person name="Ferenci T."/>
            <person name="Zhou Z."/>
            <person name="Betteridge T."/>
            <person name="Ren Y."/>
            <person name="Liu Y."/>
            <person name="Feng L."/>
            <person name="Reeves P.R."/>
            <person name="Wang L."/>
        </authorList>
    </citation>
    <scope>NUCLEOTIDE SEQUENCE [LARGE SCALE GENOMIC DNA]</scope>
    <source>
        <strain>K12 / MC4100 / BW2952</strain>
    </source>
</reference>
<evidence type="ECO:0000255" key="1">
    <source>
        <dbReference type="HAMAP-Rule" id="MF_00339"/>
    </source>
</evidence>
<dbReference type="EC" id="2.7.1.11" evidence="1"/>
<dbReference type="EMBL" id="CP001396">
    <property type="protein sequence ID" value="ACR61886.1"/>
    <property type="molecule type" value="Genomic_DNA"/>
</dbReference>
<dbReference type="RefSeq" id="WP_000591795.1">
    <property type="nucleotide sequence ID" value="NC_012759.1"/>
</dbReference>
<dbReference type="SMR" id="C5A083"/>
<dbReference type="GeneID" id="93777982"/>
<dbReference type="KEGG" id="ebw:BWG_3585"/>
<dbReference type="HOGENOM" id="CLU_020655_0_1_6"/>
<dbReference type="UniPathway" id="UPA00109">
    <property type="reaction ID" value="UER00182"/>
</dbReference>
<dbReference type="GO" id="GO:0005945">
    <property type="term" value="C:6-phosphofructokinase complex"/>
    <property type="evidence" value="ECO:0007669"/>
    <property type="project" value="TreeGrafter"/>
</dbReference>
<dbReference type="GO" id="GO:0003872">
    <property type="term" value="F:6-phosphofructokinase activity"/>
    <property type="evidence" value="ECO:0007669"/>
    <property type="project" value="UniProtKB-UniRule"/>
</dbReference>
<dbReference type="GO" id="GO:0016208">
    <property type="term" value="F:AMP binding"/>
    <property type="evidence" value="ECO:0007669"/>
    <property type="project" value="TreeGrafter"/>
</dbReference>
<dbReference type="GO" id="GO:0005524">
    <property type="term" value="F:ATP binding"/>
    <property type="evidence" value="ECO:0007669"/>
    <property type="project" value="UniProtKB-KW"/>
</dbReference>
<dbReference type="GO" id="GO:0070095">
    <property type="term" value="F:fructose-6-phosphate binding"/>
    <property type="evidence" value="ECO:0007669"/>
    <property type="project" value="TreeGrafter"/>
</dbReference>
<dbReference type="GO" id="GO:0042802">
    <property type="term" value="F:identical protein binding"/>
    <property type="evidence" value="ECO:0007669"/>
    <property type="project" value="TreeGrafter"/>
</dbReference>
<dbReference type="GO" id="GO:0046872">
    <property type="term" value="F:metal ion binding"/>
    <property type="evidence" value="ECO:0007669"/>
    <property type="project" value="UniProtKB-KW"/>
</dbReference>
<dbReference type="GO" id="GO:0048029">
    <property type="term" value="F:monosaccharide binding"/>
    <property type="evidence" value="ECO:0007669"/>
    <property type="project" value="TreeGrafter"/>
</dbReference>
<dbReference type="GO" id="GO:0061621">
    <property type="term" value="P:canonical glycolysis"/>
    <property type="evidence" value="ECO:0007669"/>
    <property type="project" value="TreeGrafter"/>
</dbReference>
<dbReference type="GO" id="GO:0030388">
    <property type="term" value="P:fructose 1,6-bisphosphate metabolic process"/>
    <property type="evidence" value="ECO:0007669"/>
    <property type="project" value="TreeGrafter"/>
</dbReference>
<dbReference type="GO" id="GO:0006002">
    <property type="term" value="P:fructose 6-phosphate metabolic process"/>
    <property type="evidence" value="ECO:0007669"/>
    <property type="project" value="InterPro"/>
</dbReference>
<dbReference type="CDD" id="cd00763">
    <property type="entry name" value="Bacterial_PFK"/>
    <property type="match status" value="1"/>
</dbReference>
<dbReference type="FunFam" id="3.40.50.450:FF:000001">
    <property type="entry name" value="ATP-dependent 6-phosphofructokinase"/>
    <property type="match status" value="1"/>
</dbReference>
<dbReference type="FunFam" id="3.40.50.460:FF:000002">
    <property type="entry name" value="ATP-dependent 6-phosphofructokinase"/>
    <property type="match status" value="1"/>
</dbReference>
<dbReference type="Gene3D" id="3.40.50.450">
    <property type="match status" value="1"/>
</dbReference>
<dbReference type="Gene3D" id="3.40.50.460">
    <property type="entry name" value="Phosphofructokinase domain"/>
    <property type="match status" value="1"/>
</dbReference>
<dbReference type="HAMAP" id="MF_00339">
    <property type="entry name" value="Phosphofructokinase_I_B1"/>
    <property type="match status" value="1"/>
</dbReference>
<dbReference type="InterPro" id="IPR022953">
    <property type="entry name" value="ATP_PFK"/>
</dbReference>
<dbReference type="InterPro" id="IPR012003">
    <property type="entry name" value="ATP_PFK_prok-type"/>
</dbReference>
<dbReference type="InterPro" id="IPR012828">
    <property type="entry name" value="PFKA_ATP_prok"/>
</dbReference>
<dbReference type="InterPro" id="IPR015912">
    <property type="entry name" value="Phosphofructokinase_CS"/>
</dbReference>
<dbReference type="InterPro" id="IPR000023">
    <property type="entry name" value="Phosphofructokinase_dom"/>
</dbReference>
<dbReference type="InterPro" id="IPR035966">
    <property type="entry name" value="PKF_sf"/>
</dbReference>
<dbReference type="NCBIfam" id="TIGR02482">
    <property type="entry name" value="PFKA_ATP"/>
    <property type="match status" value="1"/>
</dbReference>
<dbReference type="NCBIfam" id="NF002872">
    <property type="entry name" value="PRK03202.1"/>
    <property type="match status" value="1"/>
</dbReference>
<dbReference type="PANTHER" id="PTHR13697:SF4">
    <property type="entry name" value="ATP-DEPENDENT 6-PHOSPHOFRUCTOKINASE"/>
    <property type="match status" value="1"/>
</dbReference>
<dbReference type="PANTHER" id="PTHR13697">
    <property type="entry name" value="PHOSPHOFRUCTOKINASE"/>
    <property type="match status" value="1"/>
</dbReference>
<dbReference type="Pfam" id="PF00365">
    <property type="entry name" value="PFK"/>
    <property type="match status" value="1"/>
</dbReference>
<dbReference type="PIRSF" id="PIRSF000532">
    <property type="entry name" value="ATP_PFK_prok"/>
    <property type="match status" value="1"/>
</dbReference>
<dbReference type="PRINTS" id="PR00476">
    <property type="entry name" value="PHFRCTKINASE"/>
</dbReference>
<dbReference type="SUPFAM" id="SSF53784">
    <property type="entry name" value="Phosphofructokinase"/>
    <property type="match status" value="1"/>
</dbReference>
<dbReference type="PROSITE" id="PS00433">
    <property type="entry name" value="PHOSPHOFRUCTOKINASE"/>
    <property type="match status" value="1"/>
</dbReference>
<keyword id="KW-0021">Allosteric enzyme</keyword>
<keyword id="KW-0067">ATP-binding</keyword>
<keyword id="KW-0963">Cytoplasm</keyword>
<keyword id="KW-0324">Glycolysis</keyword>
<keyword id="KW-0418">Kinase</keyword>
<keyword id="KW-0460">Magnesium</keyword>
<keyword id="KW-0479">Metal-binding</keyword>
<keyword id="KW-0547">Nucleotide-binding</keyword>
<keyword id="KW-0808">Transferase</keyword>
<sequence length="320" mass="34842">MIKKIGVLTSGGDAPGMNAAIRGVVRSALTEGLEVMGIYDGYLGLYEDRMVQLDRYSVSDMINRGGTFLGSARFPEFRDENIRAVAIENLKKRGIDALVVIGGDGSYMGAMRLTEMGFPCIGLPGTIDNDIKGTDYTIGFFTALSTVVEAIDRLRDTSSSHQRISVVEVMGRYCGDLTLAAAIAGGCEFVVVPEVEFSREDLVNEIKAGIAKGKKHAIVAITEHMCDVDELAHFIEKETGRETRATVLGHIQRGGSPVPYDRILASRMGAYAIDLLLAGYGGRCVGIQNEQLVHHDIIDAIENMKRPFKGDWLDCAKKLY</sequence>
<comment type="function">
    <text evidence="1">Catalyzes the phosphorylation of D-fructose 6-phosphate to fructose 1,6-bisphosphate by ATP, the first committing step of glycolysis.</text>
</comment>
<comment type="catalytic activity">
    <reaction evidence="1">
        <text>beta-D-fructose 6-phosphate + ATP = beta-D-fructose 1,6-bisphosphate + ADP + H(+)</text>
        <dbReference type="Rhea" id="RHEA:16109"/>
        <dbReference type="ChEBI" id="CHEBI:15378"/>
        <dbReference type="ChEBI" id="CHEBI:30616"/>
        <dbReference type="ChEBI" id="CHEBI:32966"/>
        <dbReference type="ChEBI" id="CHEBI:57634"/>
        <dbReference type="ChEBI" id="CHEBI:456216"/>
        <dbReference type="EC" id="2.7.1.11"/>
    </reaction>
</comment>
<comment type="cofactor">
    <cofactor evidence="1">
        <name>Mg(2+)</name>
        <dbReference type="ChEBI" id="CHEBI:18420"/>
    </cofactor>
</comment>
<comment type="activity regulation">
    <text evidence="1">Allosterically activated by ADP and other diphosphonucleosides, and allosterically inhibited by phosphoenolpyruvate.</text>
</comment>
<comment type="pathway">
    <text evidence="1">Carbohydrate degradation; glycolysis; D-glyceraldehyde 3-phosphate and glycerone phosphate from D-glucose: step 3/4.</text>
</comment>
<comment type="subunit">
    <text evidence="1">Homotetramer.</text>
</comment>
<comment type="subcellular location">
    <subcellularLocation>
        <location evidence="1">Cytoplasm</location>
    </subcellularLocation>
</comment>
<comment type="similarity">
    <text evidence="1">Belongs to the phosphofructokinase type A (PFKA) family. ATP-dependent PFK group I subfamily. Prokaryotic clade 'B1' sub-subfamily.</text>
</comment>
<gene>
    <name evidence="1" type="primary">pfkA</name>
    <name type="ordered locus">BWG_3585</name>
</gene>
<name>PFKA_ECOBW</name>
<organism>
    <name type="scientific">Escherichia coli (strain K12 / MC4100 / BW2952)</name>
    <dbReference type="NCBI Taxonomy" id="595496"/>
    <lineage>
        <taxon>Bacteria</taxon>
        <taxon>Pseudomonadati</taxon>
        <taxon>Pseudomonadota</taxon>
        <taxon>Gammaproteobacteria</taxon>
        <taxon>Enterobacterales</taxon>
        <taxon>Enterobacteriaceae</taxon>
        <taxon>Escherichia</taxon>
    </lineage>
</organism>
<feature type="chain" id="PRO_1000205245" description="ATP-dependent 6-phosphofructokinase isozyme 1">
    <location>
        <begin position="1"/>
        <end position="320"/>
    </location>
</feature>
<feature type="active site" description="Proton acceptor" evidence="1">
    <location>
        <position position="128"/>
    </location>
</feature>
<feature type="binding site" evidence="1">
    <location>
        <position position="12"/>
    </location>
    <ligand>
        <name>ATP</name>
        <dbReference type="ChEBI" id="CHEBI:30616"/>
    </ligand>
</feature>
<feature type="binding site" evidence="1">
    <location>
        <begin position="22"/>
        <end position="26"/>
    </location>
    <ligand>
        <name>ADP</name>
        <dbReference type="ChEBI" id="CHEBI:456216"/>
        <note>allosteric activator; ligand shared between dimeric partners</note>
    </ligand>
</feature>
<feature type="binding site" evidence="1">
    <location>
        <begin position="55"/>
        <end position="60"/>
    </location>
    <ligand>
        <name>ADP</name>
        <dbReference type="ChEBI" id="CHEBI:456216"/>
        <note>allosteric activator; ligand shared between dimeric partners</note>
    </ligand>
</feature>
<feature type="binding site" evidence="1">
    <location>
        <begin position="73"/>
        <end position="74"/>
    </location>
    <ligand>
        <name>ATP</name>
        <dbReference type="ChEBI" id="CHEBI:30616"/>
    </ligand>
</feature>
<feature type="binding site" evidence="1">
    <location>
        <begin position="103"/>
        <end position="106"/>
    </location>
    <ligand>
        <name>ATP</name>
        <dbReference type="ChEBI" id="CHEBI:30616"/>
    </ligand>
</feature>
<feature type="binding site" evidence="1">
    <location>
        <position position="104"/>
    </location>
    <ligand>
        <name>Mg(2+)</name>
        <dbReference type="ChEBI" id="CHEBI:18420"/>
        <note>catalytic</note>
    </ligand>
</feature>
<feature type="binding site" description="in other chain" evidence="1">
    <location>
        <begin position="126"/>
        <end position="128"/>
    </location>
    <ligand>
        <name>substrate</name>
        <note>ligand shared between dimeric partners</note>
    </ligand>
</feature>
<feature type="binding site" description="in other chain" evidence="1">
    <location>
        <position position="155"/>
    </location>
    <ligand>
        <name>ADP</name>
        <dbReference type="ChEBI" id="CHEBI:456216"/>
        <note>allosteric activator; ligand shared between dimeric partners</note>
    </ligand>
</feature>
<feature type="binding site" evidence="1">
    <location>
        <position position="163"/>
    </location>
    <ligand>
        <name>substrate</name>
        <note>ligand shared between dimeric partners</note>
    </ligand>
</feature>
<feature type="binding site" description="in other chain" evidence="1">
    <location>
        <begin position="170"/>
        <end position="172"/>
    </location>
    <ligand>
        <name>substrate</name>
        <note>ligand shared between dimeric partners</note>
    </ligand>
</feature>
<feature type="binding site" description="in other chain" evidence="1">
    <location>
        <begin position="186"/>
        <end position="188"/>
    </location>
    <ligand>
        <name>ADP</name>
        <dbReference type="ChEBI" id="CHEBI:456216"/>
        <note>allosteric activator; ligand shared between dimeric partners</note>
    </ligand>
</feature>
<feature type="binding site" description="in other chain" evidence="1">
    <location>
        <position position="212"/>
    </location>
    <ligand>
        <name>ADP</name>
        <dbReference type="ChEBI" id="CHEBI:456216"/>
        <note>allosteric activator; ligand shared between dimeric partners</note>
    </ligand>
</feature>
<feature type="binding site" description="in other chain" evidence="1">
    <location>
        <begin position="214"/>
        <end position="216"/>
    </location>
    <ligand>
        <name>ADP</name>
        <dbReference type="ChEBI" id="CHEBI:456216"/>
        <note>allosteric activator; ligand shared between dimeric partners</note>
    </ligand>
</feature>
<feature type="binding site" description="in other chain" evidence="1">
    <location>
        <position position="223"/>
    </location>
    <ligand>
        <name>substrate</name>
        <note>ligand shared between dimeric partners</note>
    </ligand>
</feature>
<feature type="binding site" evidence="1">
    <location>
        <position position="244"/>
    </location>
    <ligand>
        <name>substrate</name>
        <note>ligand shared between dimeric partners</note>
    </ligand>
</feature>
<feature type="binding site" description="in other chain" evidence="1">
    <location>
        <begin position="250"/>
        <end position="253"/>
    </location>
    <ligand>
        <name>substrate</name>
        <note>ligand shared between dimeric partners</note>
    </ligand>
</feature>
<protein>
    <recommendedName>
        <fullName evidence="1">ATP-dependent 6-phosphofructokinase isozyme 1</fullName>
        <shortName evidence="1">ATP-PFK 1</shortName>
        <shortName evidence="1">Phosphofructokinase 1</shortName>
        <ecNumber evidence="1">2.7.1.11</ecNumber>
    </recommendedName>
    <alternativeName>
        <fullName>6-phosphofructokinase isozyme I</fullName>
    </alternativeName>
    <alternativeName>
        <fullName evidence="1">Phosphohexokinase 1</fullName>
    </alternativeName>
</protein>
<accession>C5A083</accession>
<proteinExistence type="inferred from homology"/>